<organism>
    <name type="scientific">Saccharophagus degradans (strain 2-40 / ATCC 43961 / DSM 17024)</name>
    <dbReference type="NCBI Taxonomy" id="203122"/>
    <lineage>
        <taxon>Bacteria</taxon>
        <taxon>Pseudomonadati</taxon>
        <taxon>Pseudomonadota</taxon>
        <taxon>Gammaproteobacteria</taxon>
        <taxon>Cellvibrionales</taxon>
        <taxon>Cellvibrionaceae</taxon>
        <taxon>Saccharophagus</taxon>
    </lineage>
</organism>
<keyword id="KW-1185">Reference proteome</keyword>
<keyword id="KW-0687">Ribonucleoprotein</keyword>
<keyword id="KW-0689">Ribosomal protein</keyword>
<keyword id="KW-0694">RNA-binding</keyword>
<keyword id="KW-0699">rRNA-binding</keyword>
<gene>
    <name evidence="1" type="primary">rpsN</name>
    <name type="ordered locus">Sde_0972</name>
</gene>
<protein>
    <recommendedName>
        <fullName evidence="1">Small ribosomal subunit protein uS14</fullName>
    </recommendedName>
    <alternativeName>
        <fullName evidence="2">30S ribosomal protein S14</fullName>
    </alternativeName>
</protein>
<dbReference type="EMBL" id="CP000282">
    <property type="protein sequence ID" value="ABD80234.1"/>
    <property type="molecule type" value="Genomic_DNA"/>
</dbReference>
<dbReference type="RefSeq" id="WP_011467454.1">
    <property type="nucleotide sequence ID" value="NC_007912.1"/>
</dbReference>
<dbReference type="SMR" id="Q21M45"/>
<dbReference type="STRING" id="203122.Sde_0972"/>
<dbReference type="GeneID" id="98612658"/>
<dbReference type="KEGG" id="sde:Sde_0972"/>
<dbReference type="eggNOG" id="COG0199">
    <property type="taxonomic scope" value="Bacteria"/>
</dbReference>
<dbReference type="HOGENOM" id="CLU_139869_0_1_6"/>
<dbReference type="OrthoDB" id="9810484at2"/>
<dbReference type="Proteomes" id="UP000001947">
    <property type="component" value="Chromosome"/>
</dbReference>
<dbReference type="GO" id="GO:0005737">
    <property type="term" value="C:cytoplasm"/>
    <property type="evidence" value="ECO:0007669"/>
    <property type="project" value="UniProtKB-ARBA"/>
</dbReference>
<dbReference type="GO" id="GO:0015935">
    <property type="term" value="C:small ribosomal subunit"/>
    <property type="evidence" value="ECO:0007669"/>
    <property type="project" value="TreeGrafter"/>
</dbReference>
<dbReference type="GO" id="GO:0019843">
    <property type="term" value="F:rRNA binding"/>
    <property type="evidence" value="ECO:0007669"/>
    <property type="project" value="UniProtKB-UniRule"/>
</dbReference>
<dbReference type="GO" id="GO:0003735">
    <property type="term" value="F:structural constituent of ribosome"/>
    <property type="evidence" value="ECO:0007669"/>
    <property type="project" value="InterPro"/>
</dbReference>
<dbReference type="GO" id="GO:0006412">
    <property type="term" value="P:translation"/>
    <property type="evidence" value="ECO:0007669"/>
    <property type="project" value="UniProtKB-UniRule"/>
</dbReference>
<dbReference type="FunFam" id="1.10.287.1480:FF:000001">
    <property type="entry name" value="30S ribosomal protein S14"/>
    <property type="match status" value="1"/>
</dbReference>
<dbReference type="Gene3D" id="1.10.287.1480">
    <property type="match status" value="1"/>
</dbReference>
<dbReference type="HAMAP" id="MF_00537">
    <property type="entry name" value="Ribosomal_uS14_1"/>
    <property type="match status" value="1"/>
</dbReference>
<dbReference type="InterPro" id="IPR001209">
    <property type="entry name" value="Ribosomal_uS14"/>
</dbReference>
<dbReference type="InterPro" id="IPR023036">
    <property type="entry name" value="Ribosomal_uS14_bac/plastid"/>
</dbReference>
<dbReference type="InterPro" id="IPR018271">
    <property type="entry name" value="Ribosomal_uS14_CS"/>
</dbReference>
<dbReference type="NCBIfam" id="NF006477">
    <property type="entry name" value="PRK08881.1"/>
    <property type="match status" value="1"/>
</dbReference>
<dbReference type="PANTHER" id="PTHR19836">
    <property type="entry name" value="30S RIBOSOMAL PROTEIN S14"/>
    <property type="match status" value="1"/>
</dbReference>
<dbReference type="PANTHER" id="PTHR19836:SF19">
    <property type="entry name" value="SMALL RIBOSOMAL SUBUNIT PROTEIN US14M"/>
    <property type="match status" value="1"/>
</dbReference>
<dbReference type="Pfam" id="PF00253">
    <property type="entry name" value="Ribosomal_S14"/>
    <property type="match status" value="1"/>
</dbReference>
<dbReference type="SUPFAM" id="SSF57716">
    <property type="entry name" value="Glucocorticoid receptor-like (DNA-binding domain)"/>
    <property type="match status" value="1"/>
</dbReference>
<dbReference type="PROSITE" id="PS00527">
    <property type="entry name" value="RIBOSOMAL_S14"/>
    <property type="match status" value="1"/>
</dbReference>
<evidence type="ECO:0000255" key="1">
    <source>
        <dbReference type="HAMAP-Rule" id="MF_00537"/>
    </source>
</evidence>
<evidence type="ECO:0000305" key="2"/>
<proteinExistence type="inferred from homology"/>
<name>RS14_SACD2</name>
<accession>Q21M45</accession>
<comment type="function">
    <text evidence="1">Binds 16S rRNA, required for the assembly of 30S particles and may also be responsible for determining the conformation of the 16S rRNA at the A site.</text>
</comment>
<comment type="subunit">
    <text evidence="1">Part of the 30S ribosomal subunit. Contacts proteins S3 and S10.</text>
</comment>
<comment type="similarity">
    <text evidence="1">Belongs to the universal ribosomal protein uS14 family.</text>
</comment>
<sequence length="101" mass="11646">MAKKSMIARETKRAKTVEKYAAKRAELKAIINNHESSDDQIWEAQLKLQKLPRDASPSRQQRRCRITGRPHAVYRKFGLCRNKLREAAMRGDVPGLVKASW</sequence>
<feature type="chain" id="PRO_1000128553" description="Small ribosomal subunit protein uS14">
    <location>
        <begin position="1"/>
        <end position="101"/>
    </location>
</feature>
<reference key="1">
    <citation type="journal article" date="2008" name="PLoS Genet.">
        <title>Complete genome sequence of the complex carbohydrate-degrading marine bacterium, Saccharophagus degradans strain 2-40 T.</title>
        <authorList>
            <person name="Weiner R.M."/>
            <person name="Taylor L.E. II"/>
            <person name="Henrissat B."/>
            <person name="Hauser L."/>
            <person name="Land M."/>
            <person name="Coutinho P.M."/>
            <person name="Rancurel C."/>
            <person name="Saunders E.H."/>
            <person name="Longmire A.G."/>
            <person name="Zhang H."/>
            <person name="Bayer E.A."/>
            <person name="Gilbert H.J."/>
            <person name="Larimer F."/>
            <person name="Zhulin I.B."/>
            <person name="Ekborg N.A."/>
            <person name="Lamed R."/>
            <person name="Richardson P.M."/>
            <person name="Borovok I."/>
            <person name="Hutcheson S."/>
        </authorList>
    </citation>
    <scope>NUCLEOTIDE SEQUENCE [LARGE SCALE GENOMIC DNA]</scope>
    <source>
        <strain>2-40 / ATCC 43961 / DSM 17024</strain>
    </source>
</reference>